<gene>
    <name evidence="1" type="primary">nhaP2</name>
    <name type="synonym">cvrA</name>
    <name type="ordered locus">Sbal_3425</name>
</gene>
<evidence type="ECO:0000255" key="1">
    <source>
        <dbReference type="HAMAP-Rule" id="MF_01075"/>
    </source>
</evidence>
<sequence length="576" mass="61941">MDANSINSFFLIGALLTAVSVLLSPMSSRLGIPILLIFLAVGILAGEDGPGGILFDDYSTAYLVSNLALAIILLDGGMRTRVASFRVALWPALSLATFGVAITTSITGMMAAWLFDLHWLQGLLVGAIVGSTDAAAVFSLLKGRSLNERVGATLEIESGSNDPMAVFLTVTLIAILANVDTEMSFSFMFISFIKQFGLGICLGLGGGWMLWKLVNLSKLADGLYSILVLSGGLIIYAASNKLGGSGILSIYLVGLFLGNKPTRGRHAILNVLDGMTWVSQIGMFLVLGLLLTPSDLVDILIPGFALAFGMILFARPVAVWISLLPFKSFSSRDRWFISWVGLRGAVPIILAVFPMMAGLPGAQLYFNLAFFVVLVSLLVQGASLTTAARLAKVELPPKPLPVSRSGVEIYPSSEWEVFVYRLSESKWCIGEPLKRLAMPDGTRIAAVFRNDTLLHPSGSTRLEAGDILCVLGQEKSLEALSNLFSQAPENKEVQRFFGDFFIETDVKLADLAPIYGLSLDNLADDMTVADLVVSQLGANPVLGDQFQWQSLHWVVAGLYEGKVTNVGIRLPTEHAL</sequence>
<feature type="chain" id="PRO_1000064672" description="K(+)/H(+) antiporter NhaP2">
    <location>
        <begin position="1"/>
        <end position="576"/>
    </location>
</feature>
<feature type="transmembrane region" description="Helical" evidence="1">
    <location>
        <begin position="6"/>
        <end position="26"/>
    </location>
</feature>
<feature type="transmembrane region" description="Helical" evidence="1">
    <location>
        <begin position="34"/>
        <end position="54"/>
    </location>
</feature>
<feature type="transmembrane region" description="Helical" evidence="1">
    <location>
        <begin position="58"/>
        <end position="78"/>
    </location>
</feature>
<feature type="transmembrane region" description="Helical" evidence="1">
    <location>
        <begin position="87"/>
        <end position="107"/>
    </location>
</feature>
<feature type="transmembrane region" description="Helical" evidence="1">
    <location>
        <begin position="109"/>
        <end position="129"/>
    </location>
</feature>
<feature type="transmembrane region" description="Helical" evidence="1">
    <location>
        <begin position="163"/>
        <end position="183"/>
    </location>
</feature>
<feature type="transmembrane region" description="Helical" evidence="1">
    <location>
        <begin position="185"/>
        <end position="205"/>
    </location>
</feature>
<feature type="transmembrane region" description="Helical" evidence="1">
    <location>
        <begin position="219"/>
        <end position="239"/>
    </location>
</feature>
<feature type="transmembrane region" description="Helical" evidence="1">
    <location>
        <begin position="242"/>
        <end position="262"/>
    </location>
</feature>
<feature type="transmembrane region" description="Helical" evidence="1">
    <location>
        <begin position="271"/>
        <end position="291"/>
    </location>
</feature>
<feature type="transmembrane region" description="Helical" evidence="1">
    <location>
        <begin position="299"/>
        <end position="319"/>
    </location>
</feature>
<feature type="transmembrane region" description="Helical" evidence="1">
    <location>
        <begin position="335"/>
        <end position="355"/>
    </location>
</feature>
<feature type="transmembrane region" description="Helical" evidence="1">
    <location>
        <begin position="359"/>
        <end position="379"/>
    </location>
</feature>
<feature type="domain" description="RCK C-terminal" evidence="1">
    <location>
        <begin position="405"/>
        <end position="486"/>
    </location>
</feature>
<protein>
    <recommendedName>
        <fullName evidence="1">K(+)/H(+) antiporter NhaP2</fullName>
    </recommendedName>
    <alternativeName>
        <fullName evidence="1">Potassium/proton antiporter NhaP2</fullName>
    </alternativeName>
</protein>
<organism>
    <name type="scientific">Shewanella baltica (strain OS155 / ATCC BAA-1091)</name>
    <dbReference type="NCBI Taxonomy" id="325240"/>
    <lineage>
        <taxon>Bacteria</taxon>
        <taxon>Pseudomonadati</taxon>
        <taxon>Pseudomonadota</taxon>
        <taxon>Gammaproteobacteria</taxon>
        <taxon>Alteromonadales</taxon>
        <taxon>Shewanellaceae</taxon>
        <taxon>Shewanella</taxon>
    </lineage>
</organism>
<accession>A3D839</accession>
<comment type="function">
    <text evidence="1">K(+)/H(+) antiporter that extrudes potassium in exchange for external protons and maintains the internal concentration of potassium under toxic levels.</text>
</comment>
<comment type="catalytic activity">
    <reaction evidence="1">
        <text>K(+)(in) + H(+)(out) = K(+)(out) + H(+)(in)</text>
        <dbReference type="Rhea" id="RHEA:29467"/>
        <dbReference type="ChEBI" id="CHEBI:15378"/>
        <dbReference type="ChEBI" id="CHEBI:29103"/>
    </reaction>
    <physiologicalReaction direction="left-to-right" evidence="1">
        <dbReference type="Rhea" id="RHEA:29468"/>
    </physiologicalReaction>
</comment>
<comment type="subcellular location">
    <subcellularLocation>
        <location evidence="1">Cell inner membrane</location>
        <topology evidence="1">Multi-pass membrane protein</topology>
    </subcellularLocation>
</comment>
<comment type="similarity">
    <text evidence="1">Belongs to the monovalent cation:proton antiporter 1 (CPA1) transporter (TC 2.A.36) family. NhaP2 subfamily.</text>
</comment>
<name>NHAP2_SHEB5</name>
<reference key="1">
    <citation type="submission" date="2007-02" db="EMBL/GenBank/DDBJ databases">
        <title>Complete sequence of chromosome of Shewanella baltica OS155.</title>
        <authorList>
            <consortium name="US DOE Joint Genome Institute"/>
            <person name="Copeland A."/>
            <person name="Lucas S."/>
            <person name="Lapidus A."/>
            <person name="Barry K."/>
            <person name="Detter J.C."/>
            <person name="Glavina del Rio T."/>
            <person name="Hammon N."/>
            <person name="Israni S."/>
            <person name="Dalin E."/>
            <person name="Tice H."/>
            <person name="Pitluck S."/>
            <person name="Sims D.R."/>
            <person name="Brettin T."/>
            <person name="Bruce D."/>
            <person name="Han C."/>
            <person name="Tapia R."/>
            <person name="Brainard J."/>
            <person name="Schmutz J."/>
            <person name="Larimer F."/>
            <person name="Land M."/>
            <person name="Hauser L."/>
            <person name="Kyrpides N."/>
            <person name="Mikhailova N."/>
            <person name="Brettar I."/>
            <person name="Klappenbach J."/>
            <person name="Konstantinidis K."/>
            <person name="Rodrigues J."/>
            <person name="Tiedje J."/>
            <person name="Richardson P."/>
        </authorList>
    </citation>
    <scope>NUCLEOTIDE SEQUENCE [LARGE SCALE GENOMIC DNA]</scope>
    <source>
        <strain>OS155 / ATCC BAA-1091</strain>
    </source>
</reference>
<keyword id="KW-0050">Antiport</keyword>
<keyword id="KW-0997">Cell inner membrane</keyword>
<keyword id="KW-1003">Cell membrane</keyword>
<keyword id="KW-0406">Ion transport</keyword>
<keyword id="KW-0472">Membrane</keyword>
<keyword id="KW-0630">Potassium</keyword>
<keyword id="KW-0633">Potassium transport</keyword>
<keyword id="KW-1185">Reference proteome</keyword>
<keyword id="KW-0812">Transmembrane</keyword>
<keyword id="KW-1133">Transmembrane helix</keyword>
<keyword id="KW-0813">Transport</keyword>
<proteinExistence type="inferred from homology"/>
<dbReference type="EMBL" id="CP000563">
    <property type="protein sequence ID" value="ABN62902.1"/>
    <property type="molecule type" value="Genomic_DNA"/>
</dbReference>
<dbReference type="RefSeq" id="WP_011847653.1">
    <property type="nucleotide sequence ID" value="NC_009052.1"/>
</dbReference>
<dbReference type="SMR" id="A3D839"/>
<dbReference type="STRING" id="325240.Sbal_3425"/>
<dbReference type="KEGG" id="sbl:Sbal_3425"/>
<dbReference type="HOGENOM" id="CLU_005912_9_2_6"/>
<dbReference type="OrthoDB" id="9810759at2"/>
<dbReference type="Proteomes" id="UP000001557">
    <property type="component" value="Chromosome"/>
</dbReference>
<dbReference type="GO" id="GO:0005886">
    <property type="term" value="C:plasma membrane"/>
    <property type="evidence" value="ECO:0007669"/>
    <property type="project" value="UniProtKB-SubCell"/>
</dbReference>
<dbReference type="GO" id="GO:0050660">
    <property type="term" value="F:flavin adenine dinucleotide binding"/>
    <property type="evidence" value="ECO:0007669"/>
    <property type="project" value="InterPro"/>
</dbReference>
<dbReference type="GO" id="GO:0015386">
    <property type="term" value="F:potassium:proton antiporter activity"/>
    <property type="evidence" value="ECO:0007669"/>
    <property type="project" value="UniProtKB-UniRule"/>
</dbReference>
<dbReference type="GO" id="GO:0006884">
    <property type="term" value="P:cell volume homeostasis"/>
    <property type="evidence" value="ECO:0007669"/>
    <property type="project" value="InterPro"/>
</dbReference>
<dbReference type="Gene3D" id="1.20.1530.20">
    <property type="match status" value="1"/>
</dbReference>
<dbReference type="Gene3D" id="3.30.70.1450">
    <property type="entry name" value="Regulator of K+ conductance, C-terminal domain"/>
    <property type="match status" value="1"/>
</dbReference>
<dbReference type="HAMAP" id="MF_01075">
    <property type="entry name" value="NhaP2"/>
    <property type="match status" value="1"/>
</dbReference>
<dbReference type="InterPro" id="IPR006153">
    <property type="entry name" value="Cation/H_exchanger_TM"/>
</dbReference>
<dbReference type="InterPro" id="IPR036318">
    <property type="entry name" value="FAD-bd_PCMH-like_sf"/>
</dbReference>
<dbReference type="InterPro" id="IPR038770">
    <property type="entry name" value="Na+/solute_symporter_sf"/>
</dbReference>
<dbReference type="InterPro" id="IPR023729">
    <property type="entry name" value="NhaP2"/>
</dbReference>
<dbReference type="InterPro" id="IPR006037">
    <property type="entry name" value="RCK_C"/>
</dbReference>
<dbReference type="InterPro" id="IPR036721">
    <property type="entry name" value="RCK_C_sf"/>
</dbReference>
<dbReference type="InterPro" id="IPR005170">
    <property type="entry name" value="Transptr-assoc_dom"/>
</dbReference>
<dbReference type="NCBIfam" id="NF003714">
    <property type="entry name" value="PRK05326.1-1"/>
    <property type="match status" value="1"/>
</dbReference>
<dbReference type="NCBIfam" id="NF003715">
    <property type="entry name" value="PRK05326.1-2"/>
    <property type="match status" value="1"/>
</dbReference>
<dbReference type="NCBIfam" id="NF003716">
    <property type="entry name" value="PRK05326.1-3"/>
    <property type="match status" value="1"/>
</dbReference>
<dbReference type="PANTHER" id="PTHR32507:SF7">
    <property type="entry name" value="K(+)_H(+) ANTIPORTER NHAP2"/>
    <property type="match status" value="1"/>
</dbReference>
<dbReference type="PANTHER" id="PTHR32507">
    <property type="entry name" value="NA(+)/H(+) ANTIPORTER 1"/>
    <property type="match status" value="1"/>
</dbReference>
<dbReference type="Pfam" id="PF03471">
    <property type="entry name" value="CorC_HlyC"/>
    <property type="match status" value="1"/>
</dbReference>
<dbReference type="Pfam" id="PF00999">
    <property type="entry name" value="Na_H_Exchanger"/>
    <property type="match status" value="1"/>
</dbReference>
<dbReference type="Pfam" id="PF02080">
    <property type="entry name" value="TrkA_C"/>
    <property type="match status" value="1"/>
</dbReference>
<dbReference type="SMART" id="SM01091">
    <property type="entry name" value="CorC_HlyC"/>
    <property type="match status" value="1"/>
</dbReference>
<dbReference type="SUPFAM" id="SSF56176">
    <property type="entry name" value="FAD-binding/transporter-associated domain-like"/>
    <property type="match status" value="1"/>
</dbReference>
<dbReference type="SUPFAM" id="SSF116726">
    <property type="entry name" value="TrkA C-terminal domain-like"/>
    <property type="match status" value="1"/>
</dbReference>
<dbReference type="PROSITE" id="PS51202">
    <property type="entry name" value="RCK_C"/>
    <property type="match status" value="1"/>
</dbReference>